<proteinExistence type="evidence at transcript level"/>
<protein>
    <recommendedName>
        <fullName>Fibroblast growth factor 1</fullName>
        <shortName>FGF-1</shortName>
    </recommendedName>
    <alternativeName>
        <fullName>Acidic fibroblast growth factor</fullName>
        <shortName>aFGF</shortName>
    </alternativeName>
    <alternativeName>
        <fullName>Heparin-binding growth factor 1</fullName>
        <shortName>HBGF-1</shortName>
    </alternativeName>
</protein>
<comment type="function">
    <text evidence="3">Plays an important role in the regulation of cell survival, cell division, angiogenesis, cell differentiation and cell migration. Functions as a potent mitogen in vitro. Acts as a ligand for FGFR1 and integrins. Binds to FGFR1 in the presence of heparin leading to FGFR1 dimerization and activation via sequential autophosphorylation on tyrosine residues which act as docking sites for interacting proteins, leading to the activation of several signaling cascades. Binds to integrin ITGAV:ITGB3. Its binding to integrin, subsequent ternary complex formation with integrin and FGFR1, and the recruitment of PTPN11 to the complex are essential for FGF1 signaling. Induces the phosphorylation and activation of FGFR1, FRS2, MAPK3/ERK1, MAPK1/ERK2 and AKT1. Can induce angiogenesis.</text>
</comment>
<comment type="subunit">
    <text evidence="3">Monomer. Homodimer. Interacts with FGFR1, FGFR2, FGFR3 and FGFR4. Affinity between fibroblast growth factors (FGFs) and their receptors is increased by heparan sulfate glycosaminoglycans that function as coreceptors. Found in a complex with FGFBP1, FGF1 and FGF2. Interacts with FGFBP1. Part of a Cu(2+)-dependent multiprotein aggregate containing FGF1, S100A13 and SYT1. Interacts with SYT1. Interacts with S100A13 (By similarity). Interacts with LRRC59 (By similarity). Interacts with CSNKA, CSNKB and FIBP (By similarity). While binding with LRRC59, CSNKA and FIBP seem mutually exclusive, CSNKB and FIBP may cooperatively interact with FGF1. Forms a ternary complex with FGFR1 and ITGAV:ITGB3 and induces the recruitment of PTPN11 to the complex (By similarity).</text>
</comment>
<comment type="subcellular location">
    <subcellularLocation>
        <location>Secreted</location>
    </subcellularLocation>
    <subcellularLocation>
        <location evidence="1">Cytoplasm</location>
    </subcellularLocation>
    <subcellularLocation>
        <location evidence="1">Cytoplasm</location>
        <location evidence="1">Cell cortex</location>
    </subcellularLocation>
    <subcellularLocation>
        <location evidence="1">Cytoplasm</location>
        <location evidence="1">Cytosol</location>
    </subcellularLocation>
    <subcellularLocation>
        <location evidence="1">Nucleus</location>
    </subcellularLocation>
    <text evidence="1">Lacks a cleavable signal sequence. Within the cytoplasm, it is transported to the cell membrane and then secreted by a non-classical pathway that requires Cu(2+) ions and S100A13. Secreted in a complex with SYT1. Binding of exogenous FGF1 to FGFR facilitates endocytosis followed by translocation of FGF1 across endosomal membrane into the cytosol. Nuclear import from the cytosol requires the classical nuclear import machinery, involving proteins KPNA1 and KPNB1, as well as LRRC59 (By similarity).</text>
</comment>
<comment type="PTM">
    <text evidence="1">In the nucleus, phosphorylated by PKC/PRKCD.</text>
</comment>
<comment type="similarity">
    <text evidence="4">Belongs to the heparin-binding growth factors family.</text>
</comment>
<sequence length="155" mass="17404">MAEGEITTFSALTERFNLPPGNYKKPKLLYCSNGGHFLRILPDGTVDGTRDRSDQHIQLQLSAESAGEVYIKGTETGQYLAMDTDGLLYGSQTPNEECLFLERLEENHYNTYTSKKHAEKNWFVGLKKNGSCKRGPRTHYGQKAILFLPLPVSSD</sequence>
<dbReference type="PIR" id="A60721">
    <property type="entry name" value="A60721"/>
</dbReference>
<dbReference type="RefSeq" id="XP_005069250.1">
    <property type="nucleotide sequence ID" value="XM_005069193.2"/>
</dbReference>
<dbReference type="RefSeq" id="XP_012968217.1">
    <property type="nucleotide sequence ID" value="XM_013112763.1"/>
</dbReference>
<dbReference type="RefSeq" id="XP_012968218.1">
    <property type="nucleotide sequence ID" value="XM_013112764.1"/>
</dbReference>
<dbReference type="BMRB" id="P34004"/>
<dbReference type="SMR" id="P34004"/>
<dbReference type="STRING" id="10036.ENSMAUP00000011199"/>
<dbReference type="Ensembl" id="ENSMAUT00000015080">
    <property type="protein sequence ID" value="ENSMAUP00000011199"/>
    <property type="gene ID" value="ENSMAUG00000011876"/>
</dbReference>
<dbReference type="GeneID" id="101823630"/>
<dbReference type="KEGG" id="maua:101823630"/>
<dbReference type="CTD" id="2246"/>
<dbReference type="eggNOG" id="KOG3885">
    <property type="taxonomic scope" value="Eukaryota"/>
</dbReference>
<dbReference type="OrthoDB" id="5987799at2759"/>
<dbReference type="Proteomes" id="UP000189706">
    <property type="component" value="Unplaced"/>
</dbReference>
<dbReference type="GO" id="GO:0005938">
    <property type="term" value="C:cell cortex"/>
    <property type="evidence" value="ECO:0007669"/>
    <property type="project" value="UniProtKB-SubCell"/>
</dbReference>
<dbReference type="GO" id="GO:0005829">
    <property type="term" value="C:cytosol"/>
    <property type="evidence" value="ECO:0000250"/>
    <property type="project" value="UniProtKB"/>
</dbReference>
<dbReference type="GO" id="GO:0031012">
    <property type="term" value="C:extracellular matrix"/>
    <property type="evidence" value="ECO:0007669"/>
    <property type="project" value="Ensembl"/>
</dbReference>
<dbReference type="GO" id="GO:0005576">
    <property type="term" value="C:extracellular region"/>
    <property type="evidence" value="ECO:0000250"/>
    <property type="project" value="UniProtKB"/>
</dbReference>
<dbReference type="GO" id="GO:0005615">
    <property type="term" value="C:extracellular space"/>
    <property type="evidence" value="ECO:0000250"/>
    <property type="project" value="UniProtKB"/>
</dbReference>
<dbReference type="GO" id="GO:0005654">
    <property type="term" value="C:nucleoplasm"/>
    <property type="evidence" value="ECO:0007669"/>
    <property type="project" value="Ensembl"/>
</dbReference>
<dbReference type="GO" id="GO:0005104">
    <property type="term" value="F:fibroblast growth factor receptor binding"/>
    <property type="evidence" value="ECO:0000250"/>
    <property type="project" value="UniProtKB"/>
</dbReference>
<dbReference type="GO" id="GO:0008083">
    <property type="term" value="F:growth factor activity"/>
    <property type="evidence" value="ECO:0000250"/>
    <property type="project" value="UniProtKB"/>
</dbReference>
<dbReference type="GO" id="GO:0008201">
    <property type="term" value="F:heparin binding"/>
    <property type="evidence" value="ECO:0000250"/>
    <property type="project" value="UniProtKB"/>
</dbReference>
<dbReference type="GO" id="GO:0005178">
    <property type="term" value="F:integrin binding"/>
    <property type="evidence" value="ECO:0000250"/>
    <property type="project" value="UniProtKB"/>
</dbReference>
<dbReference type="GO" id="GO:0044548">
    <property type="term" value="F:S100 protein binding"/>
    <property type="evidence" value="ECO:0000250"/>
    <property type="project" value="UniProtKB"/>
</dbReference>
<dbReference type="GO" id="GO:0032148">
    <property type="term" value="P:activation of protein kinase B activity"/>
    <property type="evidence" value="ECO:0000250"/>
    <property type="project" value="UniProtKB"/>
</dbReference>
<dbReference type="GO" id="GO:0001525">
    <property type="term" value="P:angiogenesis"/>
    <property type="evidence" value="ECO:0007669"/>
    <property type="project" value="UniProtKB-KW"/>
</dbReference>
<dbReference type="GO" id="GO:0060681">
    <property type="term" value="P:branch elongation involved in ureteric bud branching"/>
    <property type="evidence" value="ECO:0000250"/>
    <property type="project" value="UniProtKB"/>
</dbReference>
<dbReference type="GO" id="GO:0030154">
    <property type="term" value="P:cell differentiation"/>
    <property type="evidence" value="ECO:0007669"/>
    <property type="project" value="UniProtKB-KW"/>
</dbReference>
<dbReference type="GO" id="GO:0034605">
    <property type="term" value="P:cellular response to heat"/>
    <property type="evidence" value="ECO:0000250"/>
    <property type="project" value="UniProtKB"/>
</dbReference>
<dbReference type="GO" id="GO:0050673">
    <property type="term" value="P:epithelial cell proliferation"/>
    <property type="evidence" value="ECO:0007669"/>
    <property type="project" value="Ensembl"/>
</dbReference>
<dbReference type="GO" id="GO:0008543">
    <property type="term" value="P:fibroblast growth factor receptor signaling pathway"/>
    <property type="evidence" value="ECO:0000250"/>
    <property type="project" value="UniProtKB"/>
</dbReference>
<dbReference type="GO" id="GO:0030324">
    <property type="term" value="P:lung development"/>
    <property type="evidence" value="ECO:0007669"/>
    <property type="project" value="Ensembl"/>
</dbReference>
<dbReference type="GO" id="GO:0072163">
    <property type="term" value="P:mesonephric epithelium development"/>
    <property type="evidence" value="ECO:0000250"/>
    <property type="project" value="UniProtKB"/>
</dbReference>
<dbReference type="GO" id="GO:0001759">
    <property type="term" value="P:organ induction"/>
    <property type="evidence" value="ECO:0007669"/>
    <property type="project" value="Ensembl"/>
</dbReference>
<dbReference type="GO" id="GO:0045766">
    <property type="term" value="P:positive regulation of angiogenesis"/>
    <property type="evidence" value="ECO:0000250"/>
    <property type="project" value="UniProtKB"/>
</dbReference>
<dbReference type="GO" id="GO:0051781">
    <property type="term" value="P:positive regulation of cell division"/>
    <property type="evidence" value="ECO:0000250"/>
    <property type="project" value="UniProtKB"/>
</dbReference>
<dbReference type="GO" id="GO:0030335">
    <property type="term" value="P:positive regulation of cell migration"/>
    <property type="evidence" value="ECO:0000250"/>
    <property type="project" value="UniProtKB"/>
</dbReference>
<dbReference type="GO" id="GO:0008284">
    <property type="term" value="P:positive regulation of cell population proliferation"/>
    <property type="evidence" value="ECO:0000250"/>
    <property type="project" value="UniProtKB"/>
</dbReference>
<dbReference type="GO" id="GO:0045542">
    <property type="term" value="P:positive regulation of cholesterol biosynthetic process"/>
    <property type="evidence" value="ECO:0000250"/>
    <property type="project" value="UniProtKB"/>
</dbReference>
<dbReference type="GO" id="GO:0010595">
    <property type="term" value="P:positive regulation of endothelial cell migration"/>
    <property type="evidence" value="ECO:0000250"/>
    <property type="project" value="UniProtKB"/>
</dbReference>
<dbReference type="GO" id="GO:0050679">
    <property type="term" value="P:positive regulation of epithelial cell proliferation"/>
    <property type="evidence" value="ECO:0007669"/>
    <property type="project" value="Ensembl"/>
</dbReference>
<dbReference type="GO" id="GO:0070374">
    <property type="term" value="P:positive regulation of ERK1 and ERK2 cascade"/>
    <property type="evidence" value="ECO:0000250"/>
    <property type="project" value="UniProtKB"/>
</dbReference>
<dbReference type="GO" id="GO:1902533">
    <property type="term" value="P:positive regulation of intracellular signal transduction"/>
    <property type="evidence" value="ECO:0000250"/>
    <property type="project" value="UniProtKB"/>
</dbReference>
<dbReference type="GO" id="GO:1903672">
    <property type="term" value="P:positive regulation of sprouting angiogenesis"/>
    <property type="evidence" value="ECO:0000250"/>
    <property type="project" value="UniProtKB"/>
</dbReference>
<dbReference type="GO" id="GO:0045944">
    <property type="term" value="P:positive regulation of transcription by RNA polymerase II"/>
    <property type="evidence" value="ECO:0000250"/>
    <property type="project" value="UniProtKB"/>
</dbReference>
<dbReference type="GO" id="GO:2000544">
    <property type="term" value="P:regulation of endothelial cell chemotaxis to fibroblast growth factor"/>
    <property type="evidence" value="ECO:0007669"/>
    <property type="project" value="Ensembl"/>
</dbReference>
<dbReference type="GO" id="GO:1901509">
    <property type="term" value="P:regulation of endothelial tube morphogenesis"/>
    <property type="evidence" value="ECO:0000250"/>
    <property type="project" value="UniProtKB"/>
</dbReference>
<dbReference type="GO" id="GO:0042060">
    <property type="term" value="P:wound healing"/>
    <property type="evidence" value="ECO:0007669"/>
    <property type="project" value="Ensembl"/>
</dbReference>
<dbReference type="CDD" id="cd23313">
    <property type="entry name" value="beta-trefoil_FGF1"/>
    <property type="match status" value="1"/>
</dbReference>
<dbReference type="FunFam" id="2.80.10.50:FF:000020">
    <property type="entry name" value="Fibroblast growth factor 1"/>
    <property type="match status" value="1"/>
</dbReference>
<dbReference type="Gene3D" id="2.80.10.50">
    <property type="match status" value="1"/>
</dbReference>
<dbReference type="InterPro" id="IPR002209">
    <property type="entry name" value="Fibroblast_GF_fam"/>
</dbReference>
<dbReference type="InterPro" id="IPR008996">
    <property type="entry name" value="IL1/FGF"/>
</dbReference>
<dbReference type="PANTHER" id="PTHR11486">
    <property type="entry name" value="FIBROBLAST GROWTH FACTOR"/>
    <property type="match status" value="1"/>
</dbReference>
<dbReference type="Pfam" id="PF00167">
    <property type="entry name" value="FGF"/>
    <property type="match status" value="1"/>
</dbReference>
<dbReference type="PRINTS" id="PR00263">
    <property type="entry name" value="HBGFFGF"/>
</dbReference>
<dbReference type="PRINTS" id="PR00262">
    <property type="entry name" value="IL1HBGF"/>
</dbReference>
<dbReference type="SMART" id="SM00442">
    <property type="entry name" value="FGF"/>
    <property type="match status" value="1"/>
</dbReference>
<dbReference type="SUPFAM" id="SSF50353">
    <property type="entry name" value="Cytokine"/>
    <property type="match status" value="1"/>
</dbReference>
<dbReference type="PROSITE" id="PS00247">
    <property type="entry name" value="HBGF_FGF"/>
    <property type="match status" value="1"/>
</dbReference>
<feature type="initiator methionine" description="Removed" evidence="2">
    <location>
        <position position="1"/>
    </location>
</feature>
<feature type="propeptide" id="PRO_0000008909" evidence="1">
    <location>
        <begin position="2"/>
        <end position="15"/>
    </location>
</feature>
<feature type="chain" id="PRO_0000008910" description="Fibroblast growth factor 1">
    <location>
        <begin position="16"/>
        <end position="155"/>
    </location>
</feature>
<feature type="region of interest" description="Heparin-binding" evidence="1">
    <location>
        <begin position="127"/>
        <end position="143"/>
    </location>
</feature>
<feature type="binding site" evidence="1">
    <location>
        <position position="33"/>
    </location>
    <ligand>
        <name>heparin</name>
        <dbReference type="ChEBI" id="CHEBI:28304"/>
    </ligand>
</feature>
<feature type="modified residue" description="N-acetylalanine" evidence="2">
    <location>
        <position position="2"/>
    </location>
</feature>
<evidence type="ECO:0000250" key="1"/>
<evidence type="ECO:0000250" key="2">
    <source>
        <dbReference type="UniProtKB" id="P03968"/>
    </source>
</evidence>
<evidence type="ECO:0000250" key="3">
    <source>
        <dbReference type="UniProtKB" id="P05230"/>
    </source>
</evidence>
<evidence type="ECO:0000305" key="4"/>
<keyword id="KW-0007">Acetylation</keyword>
<keyword id="KW-0037">Angiogenesis</keyword>
<keyword id="KW-0963">Cytoplasm</keyword>
<keyword id="KW-0217">Developmental protein</keyword>
<keyword id="KW-0221">Differentiation</keyword>
<keyword id="KW-0339">Growth factor</keyword>
<keyword id="KW-0358">Heparin-binding</keyword>
<keyword id="KW-0497">Mitogen</keyword>
<keyword id="KW-0539">Nucleus</keyword>
<keyword id="KW-0597">Phosphoprotein</keyword>
<keyword id="KW-1185">Reference proteome</keyword>
<keyword id="KW-0964">Secreted</keyword>
<organism>
    <name type="scientific">Mesocricetus auratus</name>
    <name type="common">Golden hamster</name>
    <dbReference type="NCBI Taxonomy" id="10036"/>
    <lineage>
        <taxon>Eukaryota</taxon>
        <taxon>Metazoa</taxon>
        <taxon>Chordata</taxon>
        <taxon>Craniata</taxon>
        <taxon>Vertebrata</taxon>
        <taxon>Euteleostomi</taxon>
        <taxon>Mammalia</taxon>
        <taxon>Eutheria</taxon>
        <taxon>Euarchontoglires</taxon>
        <taxon>Glires</taxon>
        <taxon>Rodentia</taxon>
        <taxon>Myomorpha</taxon>
        <taxon>Muroidea</taxon>
        <taxon>Cricetidae</taxon>
        <taxon>Cricetinae</taxon>
        <taxon>Mesocricetus</taxon>
    </lineage>
</organism>
<reference key="1">
    <citation type="journal article" date="1990" name="J. Cell. Biochem.">
        <title>Characterization of the hamster DDT-1 cell aFGF/HGBF-I gene and cDNA and its modulation by steroids.</title>
        <authorList>
            <person name="Hall J.A."/>
            <person name="Harris M.A."/>
            <person name="Malark M."/>
            <person name="Mansson P.E."/>
            <person name="Zhou H."/>
            <person name="Harris S.E."/>
        </authorList>
    </citation>
    <scope>NUCLEOTIDE SEQUENCE [MRNA]</scope>
</reference>
<accession>P34004</accession>
<name>FGF1_MESAU</name>
<gene>
    <name type="primary">FGF1</name>
</gene>